<name>PYRF_CHRVO</name>
<accession>Q7NTL2</accession>
<keyword id="KW-0210">Decarboxylase</keyword>
<keyword id="KW-0456">Lyase</keyword>
<keyword id="KW-0665">Pyrimidine biosynthesis</keyword>
<keyword id="KW-1185">Reference proteome</keyword>
<reference key="1">
    <citation type="journal article" date="2003" name="Proc. Natl. Acad. Sci. U.S.A.">
        <title>The complete genome sequence of Chromobacterium violaceum reveals remarkable and exploitable bacterial adaptability.</title>
        <authorList>
            <person name="Vasconcelos A.T.R."/>
            <person name="de Almeida D.F."/>
            <person name="Hungria M."/>
            <person name="Guimaraes C.T."/>
            <person name="Antonio R.V."/>
            <person name="Almeida F.C."/>
            <person name="de Almeida L.G.P."/>
            <person name="de Almeida R."/>
            <person name="Alves-Gomes J.A."/>
            <person name="Andrade E.M."/>
            <person name="Araripe J."/>
            <person name="de Araujo M.F.F."/>
            <person name="Astolfi-Filho S."/>
            <person name="Azevedo V."/>
            <person name="Baptista A.J."/>
            <person name="Bataus L.A.M."/>
            <person name="Batista J.S."/>
            <person name="Belo A."/>
            <person name="van den Berg C."/>
            <person name="Bogo M."/>
            <person name="Bonatto S."/>
            <person name="Bordignon J."/>
            <person name="Brigido M.M."/>
            <person name="Brito C.A."/>
            <person name="Brocchi M."/>
            <person name="Burity H.A."/>
            <person name="Camargo A.A."/>
            <person name="Cardoso D.D.P."/>
            <person name="Carneiro N.P."/>
            <person name="Carraro D.M."/>
            <person name="Carvalho C.M.B."/>
            <person name="Cascardo J.C.M."/>
            <person name="Cavada B.S."/>
            <person name="Chueire L.M.O."/>
            <person name="Creczynski-Pasa T.B."/>
            <person name="Cunha-Junior N.C."/>
            <person name="Fagundes N."/>
            <person name="Falcao C.L."/>
            <person name="Fantinatti F."/>
            <person name="Farias I.P."/>
            <person name="Felipe M.S.S."/>
            <person name="Ferrari L.P."/>
            <person name="Ferro J.A."/>
            <person name="Ferro M.I.T."/>
            <person name="Franco G.R."/>
            <person name="Freitas N.S.A."/>
            <person name="Furlan L.R."/>
            <person name="Gazzinelli R.T."/>
            <person name="Gomes E.A."/>
            <person name="Goncalves P.R."/>
            <person name="Grangeiro T.B."/>
            <person name="Grattapaglia D."/>
            <person name="Grisard E.C."/>
            <person name="Hanna E.S."/>
            <person name="Jardim S.N."/>
            <person name="Laurino J."/>
            <person name="Leoi L.C.T."/>
            <person name="Lima L.F.A."/>
            <person name="Loureiro M.F."/>
            <person name="Lyra M.C.C.P."/>
            <person name="Madeira H.M.F."/>
            <person name="Manfio G.P."/>
            <person name="Maranhao A.Q."/>
            <person name="Martins W.S."/>
            <person name="di Mauro S.M.Z."/>
            <person name="de Medeiros S.R.B."/>
            <person name="Meissner R.V."/>
            <person name="Moreira M.A.M."/>
            <person name="Nascimento F.F."/>
            <person name="Nicolas M.F."/>
            <person name="Oliveira J.G."/>
            <person name="Oliveira S.C."/>
            <person name="Paixao R.F.C."/>
            <person name="Parente J.A."/>
            <person name="Pedrosa F.O."/>
            <person name="Pena S.D.J."/>
            <person name="Pereira J.O."/>
            <person name="Pereira M."/>
            <person name="Pinto L.S.R.C."/>
            <person name="Pinto L.S."/>
            <person name="Porto J.I.R."/>
            <person name="Potrich D.P."/>
            <person name="Ramalho-Neto C.E."/>
            <person name="Reis A.M.M."/>
            <person name="Rigo L.U."/>
            <person name="Rondinelli E."/>
            <person name="Santos E.B.P."/>
            <person name="Santos F.R."/>
            <person name="Schneider M.P.C."/>
            <person name="Seuanez H.N."/>
            <person name="Silva A.M.R."/>
            <person name="da Silva A.L.C."/>
            <person name="Silva D.W."/>
            <person name="Silva R."/>
            <person name="Simoes I.C."/>
            <person name="Simon D."/>
            <person name="Soares C.M.A."/>
            <person name="Soares R.B.A."/>
            <person name="Souza E.M."/>
            <person name="Souza K.R.L."/>
            <person name="Souza R.C."/>
            <person name="Steffens M.B.R."/>
            <person name="Steindel M."/>
            <person name="Teixeira S.R."/>
            <person name="Urmenyi T."/>
            <person name="Vettore A."/>
            <person name="Wassem R."/>
            <person name="Zaha A."/>
            <person name="Simpson A.J.G."/>
        </authorList>
    </citation>
    <scope>NUCLEOTIDE SEQUENCE [LARGE SCALE GENOMIC DNA]</scope>
    <source>
        <strain>ATCC 12472 / DSM 30191 / JCM 1249 / CCUG 213 / NBRC 12614 / NCIMB 9131 / NCTC 9757 / MK</strain>
    </source>
</reference>
<evidence type="ECO:0000255" key="1">
    <source>
        <dbReference type="HAMAP-Rule" id="MF_01200"/>
    </source>
</evidence>
<organism>
    <name type="scientific">Chromobacterium violaceum (strain ATCC 12472 / DSM 30191 / JCM 1249 / CCUG 213 / NBRC 12614 / NCIMB 9131 / NCTC 9757 / MK)</name>
    <dbReference type="NCBI Taxonomy" id="243365"/>
    <lineage>
        <taxon>Bacteria</taxon>
        <taxon>Pseudomonadati</taxon>
        <taxon>Pseudomonadota</taxon>
        <taxon>Betaproteobacteria</taxon>
        <taxon>Neisseriales</taxon>
        <taxon>Chromobacteriaceae</taxon>
        <taxon>Chromobacterium</taxon>
    </lineage>
</organism>
<sequence>MNPLIAQGESRTTSPVVVALDFADADGALAFASRLDPAECRLKVGKELFTSSGRHLVESLAARGFQVFLDMKFHDIPNTVAQACKAAAESGVWMVNVHASGGRRMMEAAREALAGYSQRPLLIAVTVLTSMEASDLAEVGIAATPQEHVLRLATLTRDCGLDGVVCSAQEAAMLKLALGRDFKLVTPGIRLADSAGDDQRRVMTPTAALAAGSDYLVIGRPITRAADPLAALRAINQDISVFLGKQS</sequence>
<gene>
    <name evidence="1" type="primary">pyrF</name>
    <name type="ordered locus">CV_3042</name>
</gene>
<protein>
    <recommendedName>
        <fullName evidence="1">Orotidine 5'-phosphate decarboxylase</fullName>
        <ecNumber evidence="1">4.1.1.23</ecNumber>
    </recommendedName>
    <alternativeName>
        <fullName evidence="1">OMP decarboxylase</fullName>
        <shortName evidence="1">OMPDCase</shortName>
        <shortName evidence="1">OMPdecase</shortName>
    </alternativeName>
</protein>
<dbReference type="EC" id="4.1.1.23" evidence="1"/>
<dbReference type="EMBL" id="AE016825">
    <property type="protein sequence ID" value="AAQ60711.1"/>
    <property type="molecule type" value="Genomic_DNA"/>
</dbReference>
<dbReference type="RefSeq" id="WP_011136589.1">
    <property type="nucleotide sequence ID" value="NC_005085.1"/>
</dbReference>
<dbReference type="SMR" id="Q7NTL2"/>
<dbReference type="STRING" id="243365.CV_3042"/>
<dbReference type="GeneID" id="66368748"/>
<dbReference type="KEGG" id="cvi:CV_3042"/>
<dbReference type="eggNOG" id="COG0284">
    <property type="taxonomic scope" value="Bacteria"/>
</dbReference>
<dbReference type="HOGENOM" id="CLU_067069_0_0_4"/>
<dbReference type="OrthoDB" id="9806203at2"/>
<dbReference type="UniPathway" id="UPA00070">
    <property type="reaction ID" value="UER00120"/>
</dbReference>
<dbReference type="Proteomes" id="UP000001424">
    <property type="component" value="Chromosome"/>
</dbReference>
<dbReference type="GO" id="GO:0005829">
    <property type="term" value="C:cytosol"/>
    <property type="evidence" value="ECO:0007669"/>
    <property type="project" value="TreeGrafter"/>
</dbReference>
<dbReference type="GO" id="GO:0004590">
    <property type="term" value="F:orotidine-5'-phosphate decarboxylase activity"/>
    <property type="evidence" value="ECO:0007669"/>
    <property type="project" value="UniProtKB-UniRule"/>
</dbReference>
<dbReference type="GO" id="GO:0006207">
    <property type="term" value="P:'de novo' pyrimidine nucleobase biosynthetic process"/>
    <property type="evidence" value="ECO:0007669"/>
    <property type="project" value="InterPro"/>
</dbReference>
<dbReference type="GO" id="GO:0044205">
    <property type="term" value="P:'de novo' UMP biosynthetic process"/>
    <property type="evidence" value="ECO:0007669"/>
    <property type="project" value="UniProtKB-UniRule"/>
</dbReference>
<dbReference type="CDD" id="cd04725">
    <property type="entry name" value="OMP_decarboxylase_like"/>
    <property type="match status" value="1"/>
</dbReference>
<dbReference type="FunFam" id="3.20.20.70:FF:000015">
    <property type="entry name" value="Orotidine 5'-phosphate decarboxylase"/>
    <property type="match status" value="1"/>
</dbReference>
<dbReference type="Gene3D" id="3.20.20.70">
    <property type="entry name" value="Aldolase class I"/>
    <property type="match status" value="1"/>
</dbReference>
<dbReference type="HAMAP" id="MF_01200_B">
    <property type="entry name" value="OMPdecase_type1_B"/>
    <property type="match status" value="1"/>
</dbReference>
<dbReference type="InterPro" id="IPR013785">
    <property type="entry name" value="Aldolase_TIM"/>
</dbReference>
<dbReference type="InterPro" id="IPR014732">
    <property type="entry name" value="OMPdecase"/>
</dbReference>
<dbReference type="InterPro" id="IPR018089">
    <property type="entry name" value="OMPdecase_AS"/>
</dbReference>
<dbReference type="InterPro" id="IPR047596">
    <property type="entry name" value="OMPdecase_bac"/>
</dbReference>
<dbReference type="InterPro" id="IPR001754">
    <property type="entry name" value="OMPdeCOase_dom"/>
</dbReference>
<dbReference type="InterPro" id="IPR011060">
    <property type="entry name" value="RibuloseP-bd_barrel"/>
</dbReference>
<dbReference type="NCBIfam" id="NF001273">
    <property type="entry name" value="PRK00230.1"/>
    <property type="match status" value="1"/>
</dbReference>
<dbReference type="NCBIfam" id="NF010386">
    <property type="entry name" value="PRK13813.1"/>
    <property type="match status" value="1"/>
</dbReference>
<dbReference type="NCBIfam" id="TIGR01740">
    <property type="entry name" value="pyrF"/>
    <property type="match status" value="1"/>
</dbReference>
<dbReference type="PANTHER" id="PTHR32119">
    <property type="entry name" value="OROTIDINE 5'-PHOSPHATE DECARBOXYLASE"/>
    <property type="match status" value="1"/>
</dbReference>
<dbReference type="PANTHER" id="PTHR32119:SF2">
    <property type="entry name" value="OROTIDINE 5'-PHOSPHATE DECARBOXYLASE"/>
    <property type="match status" value="1"/>
</dbReference>
<dbReference type="Pfam" id="PF00215">
    <property type="entry name" value="OMPdecase"/>
    <property type="match status" value="1"/>
</dbReference>
<dbReference type="SMART" id="SM00934">
    <property type="entry name" value="OMPdecase"/>
    <property type="match status" value="1"/>
</dbReference>
<dbReference type="SUPFAM" id="SSF51366">
    <property type="entry name" value="Ribulose-phoshate binding barrel"/>
    <property type="match status" value="1"/>
</dbReference>
<dbReference type="PROSITE" id="PS00156">
    <property type="entry name" value="OMPDECASE"/>
    <property type="match status" value="1"/>
</dbReference>
<feature type="chain" id="PRO_0000134537" description="Orotidine 5'-phosphate decarboxylase">
    <location>
        <begin position="1"/>
        <end position="247"/>
    </location>
</feature>
<feature type="active site" description="Proton donor" evidence="1">
    <location>
        <position position="72"/>
    </location>
</feature>
<feature type="binding site" evidence="1">
    <location>
        <position position="21"/>
    </location>
    <ligand>
        <name>substrate</name>
    </ligand>
</feature>
<feature type="binding site" evidence="1">
    <location>
        <position position="43"/>
    </location>
    <ligand>
        <name>substrate</name>
    </ligand>
</feature>
<feature type="binding site" evidence="1">
    <location>
        <begin position="70"/>
        <end position="79"/>
    </location>
    <ligand>
        <name>substrate</name>
    </ligand>
</feature>
<feature type="binding site" evidence="1">
    <location>
        <position position="129"/>
    </location>
    <ligand>
        <name>substrate</name>
    </ligand>
</feature>
<feature type="binding site" evidence="1">
    <location>
        <position position="190"/>
    </location>
    <ligand>
        <name>substrate</name>
    </ligand>
</feature>
<feature type="binding site" evidence="1">
    <location>
        <position position="199"/>
    </location>
    <ligand>
        <name>substrate</name>
    </ligand>
</feature>
<feature type="binding site" evidence="1">
    <location>
        <position position="219"/>
    </location>
    <ligand>
        <name>substrate</name>
    </ligand>
</feature>
<feature type="binding site" evidence="1">
    <location>
        <position position="220"/>
    </location>
    <ligand>
        <name>substrate</name>
    </ligand>
</feature>
<proteinExistence type="inferred from homology"/>
<comment type="function">
    <text evidence="1">Catalyzes the decarboxylation of orotidine 5'-monophosphate (OMP) to uridine 5'-monophosphate (UMP).</text>
</comment>
<comment type="catalytic activity">
    <reaction evidence="1">
        <text>orotidine 5'-phosphate + H(+) = UMP + CO2</text>
        <dbReference type="Rhea" id="RHEA:11596"/>
        <dbReference type="ChEBI" id="CHEBI:15378"/>
        <dbReference type="ChEBI" id="CHEBI:16526"/>
        <dbReference type="ChEBI" id="CHEBI:57538"/>
        <dbReference type="ChEBI" id="CHEBI:57865"/>
        <dbReference type="EC" id="4.1.1.23"/>
    </reaction>
</comment>
<comment type="pathway">
    <text evidence="1">Pyrimidine metabolism; UMP biosynthesis via de novo pathway; UMP from orotate: step 2/2.</text>
</comment>
<comment type="subunit">
    <text evidence="1">Homodimer.</text>
</comment>
<comment type="similarity">
    <text evidence="1">Belongs to the OMP decarboxylase family. Type 1 subfamily.</text>
</comment>